<proteinExistence type="inferred from homology"/>
<gene>
    <name evidence="1" type="primary">lipB</name>
    <name type="ordered locus">LPC_0931</name>
</gene>
<dbReference type="EC" id="2.3.1.181" evidence="1"/>
<dbReference type="EMBL" id="CP000675">
    <property type="protein sequence ID" value="ABQ54906.1"/>
    <property type="molecule type" value="Genomic_DNA"/>
</dbReference>
<dbReference type="RefSeq" id="WP_011946515.1">
    <property type="nucleotide sequence ID" value="NZ_JAPMSS010000002.1"/>
</dbReference>
<dbReference type="SMR" id="A5IC06"/>
<dbReference type="KEGG" id="lpc:LPC_0931"/>
<dbReference type="HOGENOM" id="CLU_035168_3_1_6"/>
<dbReference type="UniPathway" id="UPA00538">
    <property type="reaction ID" value="UER00592"/>
</dbReference>
<dbReference type="GO" id="GO:0005737">
    <property type="term" value="C:cytoplasm"/>
    <property type="evidence" value="ECO:0007669"/>
    <property type="project" value="UniProtKB-SubCell"/>
</dbReference>
<dbReference type="GO" id="GO:0033819">
    <property type="term" value="F:lipoyl(octanoyl) transferase activity"/>
    <property type="evidence" value="ECO:0007669"/>
    <property type="project" value="UniProtKB-EC"/>
</dbReference>
<dbReference type="GO" id="GO:0036211">
    <property type="term" value="P:protein modification process"/>
    <property type="evidence" value="ECO:0007669"/>
    <property type="project" value="InterPro"/>
</dbReference>
<dbReference type="CDD" id="cd16444">
    <property type="entry name" value="LipB"/>
    <property type="match status" value="1"/>
</dbReference>
<dbReference type="FunFam" id="3.30.930.10:FF:000020">
    <property type="entry name" value="Octanoyltransferase"/>
    <property type="match status" value="1"/>
</dbReference>
<dbReference type="Gene3D" id="3.30.930.10">
    <property type="entry name" value="Bira Bifunctional Protein, Domain 2"/>
    <property type="match status" value="1"/>
</dbReference>
<dbReference type="HAMAP" id="MF_00013">
    <property type="entry name" value="LipB"/>
    <property type="match status" value="1"/>
</dbReference>
<dbReference type="InterPro" id="IPR045864">
    <property type="entry name" value="aa-tRNA-synth_II/BPL/LPL"/>
</dbReference>
<dbReference type="InterPro" id="IPR004143">
    <property type="entry name" value="BPL_LPL_catalytic"/>
</dbReference>
<dbReference type="InterPro" id="IPR000544">
    <property type="entry name" value="Octanoyltransferase"/>
</dbReference>
<dbReference type="InterPro" id="IPR020605">
    <property type="entry name" value="Octanoyltransferase_CS"/>
</dbReference>
<dbReference type="NCBIfam" id="TIGR00214">
    <property type="entry name" value="lipB"/>
    <property type="match status" value="1"/>
</dbReference>
<dbReference type="NCBIfam" id="NF010922">
    <property type="entry name" value="PRK14342.1"/>
    <property type="match status" value="1"/>
</dbReference>
<dbReference type="PANTHER" id="PTHR10993:SF7">
    <property type="entry name" value="LIPOYLTRANSFERASE 2, MITOCHONDRIAL-RELATED"/>
    <property type="match status" value="1"/>
</dbReference>
<dbReference type="PANTHER" id="PTHR10993">
    <property type="entry name" value="OCTANOYLTRANSFERASE"/>
    <property type="match status" value="1"/>
</dbReference>
<dbReference type="Pfam" id="PF21948">
    <property type="entry name" value="LplA-B_cat"/>
    <property type="match status" value="1"/>
</dbReference>
<dbReference type="PIRSF" id="PIRSF016262">
    <property type="entry name" value="LPLase"/>
    <property type="match status" value="1"/>
</dbReference>
<dbReference type="SUPFAM" id="SSF55681">
    <property type="entry name" value="Class II aaRS and biotin synthetases"/>
    <property type="match status" value="1"/>
</dbReference>
<dbReference type="PROSITE" id="PS51733">
    <property type="entry name" value="BPL_LPL_CATALYTIC"/>
    <property type="match status" value="1"/>
</dbReference>
<dbReference type="PROSITE" id="PS01313">
    <property type="entry name" value="LIPB"/>
    <property type="match status" value="1"/>
</dbReference>
<feature type="chain" id="PRO_1000001106" description="Octanoyltransferase">
    <location>
        <begin position="1"/>
        <end position="199"/>
    </location>
</feature>
<feature type="domain" description="BPL/LPL catalytic" evidence="2">
    <location>
        <begin position="27"/>
        <end position="199"/>
    </location>
</feature>
<feature type="active site" description="Acyl-thioester intermediate" evidence="1">
    <location>
        <position position="164"/>
    </location>
</feature>
<feature type="binding site" evidence="1">
    <location>
        <begin position="66"/>
        <end position="73"/>
    </location>
    <ligand>
        <name>substrate</name>
    </ligand>
</feature>
<feature type="binding site" evidence="1">
    <location>
        <begin position="133"/>
        <end position="135"/>
    </location>
    <ligand>
        <name>substrate</name>
    </ligand>
</feature>
<feature type="binding site" evidence="1">
    <location>
        <begin position="146"/>
        <end position="148"/>
    </location>
    <ligand>
        <name>substrate</name>
    </ligand>
</feature>
<feature type="site" description="Lowers pKa of active site Cys" evidence="1">
    <location>
        <position position="130"/>
    </location>
</feature>
<reference key="1">
    <citation type="submission" date="2006-11" db="EMBL/GenBank/DDBJ databases">
        <title>Identification and characterization of a new conjugation/ type IVA secretion system (trb/tra) of L. pneumophila Corby localized on a mobile genomic island.</title>
        <authorList>
            <person name="Gloeckner G."/>
            <person name="Albert-Weissenberger C."/>
            <person name="Weinmann E."/>
            <person name="Jacobi S."/>
            <person name="Schunder E."/>
            <person name="Steinert M."/>
            <person name="Buchrieser C."/>
            <person name="Hacker J."/>
            <person name="Heuner K."/>
        </authorList>
    </citation>
    <scope>NUCLEOTIDE SEQUENCE [LARGE SCALE GENOMIC DNA]</scope>
    <source>
        <strain>Corby</strain>
    </source>
</reference>
<protein>
    <recommendedName>
        <fullName evidence="1">Octanoyltransferase</fullName>
        <ecNumber evidence="1">2.3.1.181</ecNumber>
    </recommendedName>
    <alternativeName>
        <fullName evidence="1">Lipoate-protein ligase B</fullName>
    </alternativeName>
    <alternativeName>
        <fullName evidence="1">Lipoyl/octanoyl transferase</fullName>
    </alternativeName>
    <alternativeName>
        <fullName evidence="1">Octanoyl-[acyl-carrier-protein]-protein N-octanoyltransferase</fullName>
    </alternativeName>
</protein>
<name>LIPB_LEGPC</name>
<sequence>MIIHNLGIKDYTEIWEQMKAFTAIRDSNSCDELWLLEHYPVYTQGQAGKPEHVLNPNSIKIVQSDRGGQVTYHGPGQLVAYVLMDIRRRNLGIRTLVAKLEEILISVLKHYKIPANIRSGAPGVYVGEKKIASIGLRVKNGCTYHGIALNVNMDLSPFLGINPCGFAKMEMTQMSHFHPNIQLEEVSQHFVQYFLTQFK</sequence>
<evidence type="ECO:0000255" key="1">
    <source>
        <dbReference type="HAMAP-Rule" id="MF_00013"/>
    </source>
</evidence>
<evidence type="ECO:0000255" key="2">
    <source>
        <dbReference type="PROSITE-ProRule" id="PRU01067"/>
    </source>
</evidence>
<comment type="function">
    <text evidence="1">Catalyzes the transfer of endogenously produced octanoic acid from octanoyl-acyl-carrier-protein onto the lipoyl domains of lipoate-dependent enzymes. Lipoyl-ACP can also act as a substrate although octanoyl-ACP is likely to be the physiological substrate.</text>
</comment>
<comment type="catalytic activity">
    <reaction evidence="1">
        <text>octanoyl-[ACP] + L-lysyl-[protein] = N(6)-octanoyl-L-lysyl-[protein] + holo-[ACP] + H(+)</text>
        <dbReference type="Rhea" id="RHEA:17665"/>
        <dbReference type="Rhea" id="RHEA-COMP:9636"/>
        <dbReference type="Rhea" id="RHEA-COMP:9685"/>
        <dbReference type="Rhea" id="RHEA-COMP:9752"/>
        <dbReference type="Rhea" id="RHEA-COMP:9928"/>
        <dbReference type="ChEBI" id="CHEBI:15378"/>
        <dbReference type="ChEBI" id="CHEBI:29969"/>
        <dbReference type="ChEBI" id="CHEBI:64479"/>
        <dbReference type="ChEBI" id="CHEBI:78463"/>
        <dbReference type="ChEBI" id="CHEBI:78809"/>
        <dbReference type="EC" id="2.3.1.181"/>
    </reaction>
</comment>
<comment type="pathway">
    <text evidence="1">Protein modification; protein lipoylation via endogenous pathway; protein N(6)-(lipoyl)lysine from octanoyl-[acyl-carrier-protein]: step 1/2.</text>
</comment>
<comment type="subcellular location">
    <subcellularLocation>
        <location evidence="1">Cytoplasm</location>
    </subcellularLocation>
</comment>
<comment type="miscellaneous">
    <text evidence="1">In the reaction, the free carboxyl group of octanoic acid is attached via an amide linkage to the epsilon-amino group of a specific lysine residue of lipoyl domains of lipoate-dependent enzymes.</text>
</comment>
<comment type="similarity">
    <text evidence="1">Belongs to the LipB family.</text>
</comment>
<keyword id="KW-0012">Acyltransferase</keyword>
<keyword id="KW-0963">Cytoplasm</keyword>
<keyword id="KW-0808">Transferase</keyword>
<accession>A5IC06</accession>
<organism>
    <name type="scientific">Legionella pneumophila (strain Corby)</name>
    <dbReference type="NCBI Taxonomy" id="400673"/>
    <lineage>
        <taxon>Bacteria</taxon>
        <taxon>Pseudomonadati</taxon>
        <taxon>Pseudomonadota</taxon>
        <taxon>Gammaproteobacteria</taxon>
        <taxon>Legionellales</taxon>
        <taxon>Legionellaceae</taxon>
        <taxon>Legionella</taxon>
    </lineage>
</organism>